<name>GPDL3_ARATH</name>
<gene>
    <name evidence="9" type="primary">GDPDL3</name>
    <name evidence="8" type="synonym">GPDL2</name>
    <name evidence="7" type="synonym">MRH5</name>
    <name evidence="8" type="synonym">SHV3</name>
    <name type="ordered locus">At4g26690</name>
    <name type="ORF">F10M23.30</name>
</gene>
<reference key="1">
    <citation type="journal article" date="1999" name="Nature">
        <title>Sequence and analysis of chromosome 4 of the plant Arabidopsis thaliana.</title>
        <authorList>
            <person name="Mayer K.F.X."/>
            <person name="Schueller C."/>
            <person name="Wambutt R."/>
            <person name="Murphy G."/>
            <person name="Volckaert G."/>
            <person name="Pohl T."/>
            <person name="Duesterhoeft A."/>
            <person name="Stiekema W."/>
            <person name="Entian K.-D."/>
            <person name="Terryn N."/>
            <person name="Harris B."/>
            <person name="Ansorge W."/>
            <person name="Brandt P."/>
            <person name="Grivell L.A."/>
            <person name="Rieger M."/>
            <person name="Weichselgartner M."/>
            <person name="de Simone V."/>
            <person name="Obermaier B."/>
            <person name="Mache R."/>
            <person name="Mueller M."/>
            <person name="Kreis M."/>
            <person name="Delseny M."/>
            <person name="Puigdomenech P."/>
            <person name="Watson M."/>
            <person name="Schmidtheini T."/>
            <person name="Reichert B."/>
            <person name="Portetelle D."/>
            <person name="Perez-Alonso M."/>
            <person name="Boutry M."/>
            <person name="Bancroft I."/>
            <person name="Vos P."/>
            <person name="Hoheisel J."/>
            <person name="Zimmermann W."/>
            <person name="Wedler H."/>
            <person name="Ridley P."/>
            <person name="Langham S.-A."/>
            <person name="McCullagh B."/>
            <person name="Bilham L."/>
            <person name="Robben J."/>
            <person name="van der Schueren J."/>
            <person name="Grymonprez B."/>
            <person name="Chuang Y.-J."/>
            <person name="Vandenbussche F."/>
            <person name="Braeken M."/>
            <person name="Weltjens I."/>
            <person name="Voet M."/>
            <person name="Bastiaens I."/>
            <person name="Aert R."/>
            <person name="Defoor E."/>
            <person name="Weitzenegger T."/>
            <person name="Bothe G."/>
            <person name="Ramsperger U."/>
            <person name="Hilbert H."/>
            <person name="Braun M."/>
            <person name="Holzer E."/>
            <person name="Brandt A."/>
            <person name="Peters S."/>
            <person name="van Staveren M."/>
            <person name="Dirkse W."/>
            <person name="Mooijman P."/>
            <person name="Klein Lankhorst R."/>
            <person name="Rose M."/>
            <person name="Hauf J."/>
            <person name="Koetter P."/>
            <person name="Berneiser S."/>
            <person name="Hempel S."/>
            <person name="Feldpausch M."/>
            <person name="Lamberth S."/>
            <person name="Van den Daele H."/>
            <person name="De Keyser A."/>
            <person name="Buysshaert C."/>
            <person name="Gielen J."/>
            <person name="Villarroel R."/>
            <person name="De Clercq R."/>
            <person name="van Montagu M."/>
            <person name="Rogers J."/>
            <person name="Cronin A."/>
            <person name="Quail M.A."/>
            <person name="Bray-Allen S."/>
            <person name="Clark L."/>
            <person name="Doggett J."/>
            <person name="Hall S."/>
            <person name="Kay M."/>
            <person name="Lennard N."/>
            <person name="McLay K."/>
            <person name="Mayes R."/>
            <person name="Pettett A."/>
            <person name="Rajandream M.A."/>
            <person name="Lyne M."/>
            <person name="Benes V."/>
            <person name="Rechmann S."/>
            <person name="Borkova D."/>
            <person name="Bloecker H."/>
            <person name="Scharfe M."/>
            <person name="Grimm M."/>
            <person name="Loehnert T.-H."/>
            <person name="Dose S."/>
            <person name="de Haan M."/>
            <person name="Maarse A.C."/>
            <person name="Schaefer M."/>
            <person name="Mueller-Auer S."/>
            <person name="Gabel C."/>
            <person name="Fuchs M."/>
            <person name="Fartmann B."/>
            <person name="Granderath K."/>
            <person name="Dauner D."/>
            <person name="Herzl A."/>
            <person name="Neumann S."/>
            <person name="Argiriou A."/>
            <person name="Vitale D."/>
            <person name="Liguori R."/>
            <person name="Piravandi E."/>
            <person name="Massenet O."/>
            <person name="Quigley F."/>
            <person name="Clabauld G."/>
            <person name="Muendlein A."/>
            <person name="Felber R."/>
            <person name="Schnabl S."/>
            <person name="Hiller R."/>
            <person name="Schmidt W."/>
            <person name="Lecharny A."/>
            <person name="Aubourg S."/>
            <person name="Chefdor F."/>
            <person name="Cooke R."/>
            <person name="Berger C."/>
            <person name="Monfort A."/>
            <person name="Casacuberta E."/>
            <person name="Gibbons T."/>
            <person name="Weber N."/>
            <person name="Vandenbol M."/>
            <person name="Bargues M."/>
            <person name="Terol J."/>
            <person name="Torres A."/>
            <person name="Perez-Perez A."/>
            <person name="Purnelle B."/>
            <person name="Bent E."/>
            <person name="Johnson S."/>
            <person name="Tacon D."/>
            <person name="Jesse T."/>
            <person name="Heijnen L."/>
            <person name="Schwarz S."/>
            <person name="Scholler P."/>
            <person name="Heber S."/>
            <person name="Francs P."/>
            <person name="Bielke C."/>
            <person name="Frishman D."/>
            <person name="Haase D."/>
            <person name="Lemcke K."/>
            <person name="Mewes H.-W."/>
            <person name="Stocker S."/>
            <person name="Zaccaria P."/>
            <person name="Bevan M."/>
            <person name="Wilson R.K."/>
            <person name="de la Bastide M."/>
            <person name="Habermann K."/>
            <person name="Parnell L."/>
            <person name="Dedhia N."/>
            <person name="Gnoj L."/>
            <person name="Schutz K."/>
            <person name="Huang E."/>
            <person name="Spiegel L."/>
            <person name="Sekhon M."/>
            <person name="Murray J."/>
            <person name="Sheet P."/>
            <person name="Cordes M."/>
            <person name="Abu-Threideh J."/>
            <person name="Stoneking T."/>
            <person name="Kalicki J."/>
            <person name="Graves T."/>
            <person name="Harmon G."/>
            <person name="Edwards J."/>
            <person name="Latreille P."/>
            <person name="Courtney L."/>
            <person name="Cloud J."/>
            <person name="Abbott A."/>
            <person name="Scott K."/>
            <person name="Johnson D."/>
            <person name="Minx P."/>
            <person name="Bentley D."/>
            <person name="Fulton B."/>
            <person name="Miller N."/>
            <person name="Greco T."/>
            <person name="Kemp K."/>
            <person name="Kramer J."/>
            <person name="Fulton L."/>
            <person name="Mardis E."/>
            <person name="Dante M."/>
            <person name="Pepin K."/>
            <person name="Hillier L.W."/>
            <person name="Nelson J."/>
            <person name="Spieth J."/>
            <person name="Ryan E."/>
            <person name="Andrews S."/>
            <person name="Geisel C."/>
            <person name="Layman D."/>
            <person name="Du H."/>
            <person name="Ali J."/>
            <person name="Berghoff A."/>
            <person name="Jones K."/>
            <person name="Drone K."/>
            <person name="Cotton M."/>
            <person name="Joshu C."/>
            <person name="Antonoiu B."/>
            <person name="Zidanic M."/>
            <person name="Strong C."/>
            <person name="Sun H."/>
            <person name="Lamar B."/>
            <person name="Yordan C."/>
            <person name="Ma P."/>
            <person name="Zhong J."/>
            <person name="Preston R."/>
            <person name="Vil D."/>
            <person name="Shekher M."/>
            <person name="Matero A."/>
            <person name="Shah R."/>
            <person name="Swaby I.K."/>
            <person name="O'Shaughnessy A."/>
            <person name="Rodriguez M."/>
            <person name="Hoffman J."/>
            <person name="Till S."/>
            <person name="Granat S."/>
            <person name="Shohdy N."/>
            <person name="Hasegawa A."/>
            <person name="Hameed A."/>
            <person name="Lodhi M."/>
            <person name="Johnson A."/>
            <person name="Chen E."/>
            <person name="Marra M.A."/>
            <person name="Martienssen R."/>
            <person name="McCombie W.R."/>
        </authorList>
    </citation>
    <scope>NUCLEOTIDE SEQUENCE [LARGE SCALE GENOMIC DNA]</scope>
    <source>
        <strain>cv. Columbia</strain>
    </source>
</reference>
<reference key="2">
    <citation type="journal article" date="2017" name="Plant J.">
        <title>Araport11: a complete reannotation of the Arabidopsis thaliana reference genome.</title>
        <authorList>
            <person name="Cheng C.Y."/>
            <person name="Krishnakumar V."/>
            <person name="Chan A.P."/>
            <person name="Thibaud-Nissen F."/>
            <person name="Schobel S."/>
            <person name="Town C.D."/>
        </authorList>
    </citation>
    <scope>GENOME REANNOTATION</scope>
    <source>
        <strain>cv. Columbia</strain>
    </source>
</reference>
<reference key="3">
    <citation type="journal article" date="2003" name="Science">
        <title>Empirical analysis of transcriptional activity in the Arabidopsis genome.</title>
        <authorList>
            <person name="Yamada K."/>
            <person name="Lim J."/>
            <person name="Dale J.M."/>
            <person name="Chen H."/>
            <person name="Shinn P."/>
            <person name="Palm C.J."/>
            <person name="Southwick A.M."/>
            <person name="Wu H.C."/>
            <person name="Kim C.J."/>
            <person name="Nguyen M."/>
            <person name="Pham P.K."/>
            <person name="Cheuk R.F."/>
            <person name="Karlin-Newmann G."/>
            <person name="Liu S.X."/>
            <person name="Lam B."/>
            <person name="Sakano H."/>
            <person name="Wu T."/>
            <person name="Yu G."/>
            <person name="Miranda M."/>
            <person name="Quach H.L."/>
            <person name="Tripp M."/>
            <person name="Chang C.H."/>
            <person name="Lee J.M."/>
            <person name="Toriumi M.J."/>
            <person name="Chan M.M."/>
            <person name="Tang C.C."/>
            <person name="Onodera C.S."/>
            <person name="Deng J.M."/>
            <person name="Akiyama K."/>
            <person name="Ansari Y."/>
            <person name="Arakawa T."/>
            <person name="Banh J."/>
            <person name="Banno F."/>
            <person name="Bowser L."/>
            <person name="Brooks S.Y."/>
            <person name="Carninci P."/>
            <person name="Chao Q."/>
            <person name="Choy N."/>
            <person name="Enju A."/>
            <person name="Goldsmith A.D."/>
            <person name="Gurjal M."/>
            <person name="Hansen N.F."/>
            <person name="Hayashizaki Y."/>
            <person name="Johnson-Hopson C."/>
            <person name="Hsuan V.W."/>
            <person name="Iida K."/>
            <person name="Karnes M."/>
            <person name="Khan S."/>
            <person name="Koesema E."/>
            <person name="Ishida J."/>
            <person name="Jiang P.X."/>
            <person name="Jones T."/>
            <person name="Kawai J."/>
            <person name="Kamiya A."/>
            <person name="Meyers C."/>
            <person name="Nakajima M."/>
            <person name="Narusaka M."/>
            <person name="Seki M."/>
            <person name="Sakurai T."/>
            <person name="Satou M."/>
            <person name="Tamse R."/>
            <person name="Vaysberg M."/>
            <person name="Wallender E.K."/>
            <person name="Wong C."/>
            <person name="Yamamura Y."/>
            <person name="Yuan S."/>
            <person name="Shinozaki K."/>
            <person name="Davis R.W."/>
            <person name="Theologis A."/>
            <person name="Ecker J.R."/>
        </authorList>
    </citation>
    <scope>NUCLEOTIDE SEQUENCE [LARGE SCALE MRNA]</scope>
    <source>
        <strain>cv. Columbia</strain>
    </source>
</reference>
<reference key="4">
    <citation type="journal article" date="2006" name="Plant J.">
        <title>Analysis of the root-hair morphogenesis transcriptome reveals the molecular identity of six genes with roles in root-hair development in Arabidopsis.</title>
        <authorList>
            <person name="Jones M.A."/>
            <person name="Raymond M.J."/>
            <person name="Smirnoff N."/>
        </authorList>
    </citation>
    <scope>DISRUPTION PHENOTYPE</scope>
</reference>
<reference key="5">
    <citation type="journal article" date="2008" name="Plant Cell Physiol.">
        <title>The glycerophosphoryl diester phosphodiesterase-like proteins SHV3 and its homologs play important roles in cell wall organization.</title>
        <authorList>
            <person name="Hayashi S."/>
            <person name="Ishii T."/>
            <person name="Matsunaga T."/>
            <person name="Tominaga R."/>
            <person name="Kuromori T."/>
            <person name="Wada T."/>
            <person name="Shinozaki K."/>
            <person name="Hirayama T."/>
        </authorList>
    </citation>
    <scope>FUNCTION</scope>
    <scope>SUBCELLULAR LOCATION</scope>
    <scope>TISSUE SPECIFICITY</scope>
    <scope>DISRUPTION PHENOTYPE</scope>
</reference>
<reference key="6">
    <citation type="journal article" date="2011" name="Plant J.">
        <title>Characterization of the Arabidopsis glycerophosphodiester phosphodiesterase (GDPD) family reveals a role of the plastid-localized AtGDPD1 in maintaining cellular phosphate homeostasis under phosphate starvation.</title>
        <authorList>
            <person name="Cheng Y."/>
            <person name="Zhou W."/>
            <person name="El Sheery N.I."/>
            <person name="Peters C."/>
            <person name="Li M."/>
            <person name="Wang X."/>
            <person name="Huang J."/>
        </authorList>
    </citation>
    <scope>TISSUE SPECIFICITY</scope>
    <scope>GENE FAMILY</scope>
    <scope>NOMENCLATURE</scope>
</reference>
<feature type="signal peptide" evidence="2">
    <location>
        <begin position="1"/>
        <end position="27"/>
    </location>
</feature>
<feature type="chain" id="PRO_0000012599" description="Glycerophosphodiester phosphodiesterase GDPDL3">
    <location>
        <begin position="28"/>
        <end position="759"/>
    </location>
</feature>
<feature type="topological domain" description="Extracellular" evidence="2">
    <location>
        <begin position="28"/>
        <end position="738"/>
    </location>
</feature>
<feature type="transmembrane region" description="Helical" evidence="2">
    <location>
        <begin position="739"/>
        <end position="759"/>
    </location>
</feature>
<feature type="domain" description="GP-PDE 1">
    <location>
        <begin position="44"/>
        <end position="344"/>
    </location>
</feature>
<feature type="domain" description="GP-PDE 2">
    <location>
        <begin position="360"/>
        <end position="661"/>
    </location>
</feature>
<feature type="region of interest" description="Disordered" evidence="3">
    <location>
        <begin position="702"/>
        <end position="734"/>
    </location>
</feature>
<feature type="compositionally biased region" description="Polar residues" evidence="3">
    <location>
        <begin position="719"/>
        <end position="734"/>
    </location>
</feature>
<feature type="glycosylation site" description="N-linked (GlcNAc...) asparagine" evidence="2">
    <location>
        <position position="99"/>
    </location>
</feature>
<feature type="glycosylation site" description="N-linked (GlcNAc...) asparagine" evidence="2">
    <location>
        <position position="186"/>
    </location>
</feature>
<feature type="glycosylation site" description="N-linked (GlcNAc...) asparagine" evidence="2">
    <location>
        <position position="242"/>
    </location>
</feature>
<feature type="glycosylation site" description="N-linked (GlcNAc...) asparagine" evidence="2">
    <location>
        <position position="251"/>
    </location>
</feature>
<feature type="glycosylation site" description="N-linked (GlcNAc...) asparagine" evidence="2">
    <location>
        <position position="326"/>
    </location>
</feature>
<feature type="glycosylation site" description="N-linked (GlcNAc...) asparagine" evidence="2">
    <location>
        <position position="353"/>
    </location>
</feature>
<feature type="glycosylation site" description="N-linked (GlcNAc...) asparagine" evidence="2">
    <location>
        <position position="413"/>
    </location>
</feature>
<feature type="glycosylation site" description="N-linked (GlcNAc...) asparagine" evidence="2">
    <location>
        <position position="424"/>
    </location>
</feature>
<feature type="glycosylation site" description="N-linked (GlcNAc...) asparagine" evidence="2">
    <location>
        <position position="488"/>
    </location>
</feature>
<feature type="glycosylation site" description="N-linked (GlcNAc...) asparagine" evidence="2">
    <location>
        <position position="528"/>
    </location>
</feature>
<feature type="glycosylation site" description="N-linked (GlcNAc...) asparagine" evidence="2">
    <location>
        <position position="540"/>
    </location>
</feature>
<feature type="glycosylation site" description="N-linked (GlcNAc...) asparagine" evidence="2">
    <location>
        <position position="647"/>
    </location>
</feature>
<feature type="sequence conflict" description="In Ref. 3; AAL07129." evidence="10" ref="3">
    <original>E</original>
    <variation>K</variation>
    <location>
        <position position="148"/>
    </location>
</feature>
<keyword id="KW-1003">Cell membrane</keyword>
<keyword id="KW-0961">Cell wall biogenesis/degradation</keyword>
<keyword id="KW-0319">Glycerol metabolism</keyword>
<keyword id="KW-0325">Glycoprotein</keyword>
<keyword id="KW-0378">Hydrolase</keyword>
<keyword id="KW-0472">Membrane</keyword>
<keyword id="KW-1185">Reference proteome</keyword>
<keyword id="KW-0677">Repeat</keyword>
<keyword id="KW-0732">Signal</keyword>
<keyword id="KW-0812">Transmembrane</keyword>
<keyword id="KW-1133">Transmembrane helix</keyword>
<protein>
    <recommendedName>
        <fullName evidence="10">Glycerophosphodiester phosphodiesterase GDPDL3</fullName>
        <ecNumber evidence="1">3.1.4.46</ecNumber>
    </recommendedName>
    <alternativeName>
        <fullName evidence="9">Glycerophosphodiester phosphodiesterase-like 3</fullName>
        <shortName evidence="9">ATGDPDL3</shortName>
    </alternativeName>
    <alternativeName>
        <fullName evidence="8">Glycerophosphodiesterase-like 2</fullName>
    </alternativeName>
    <alternativeName>
        <fullName evidence="7">Protein MUTANT ROOT HAIR 5</fullName>
    </alternativeName>
    <alternativeName>
        <fullName evidence="8">Protein SHAVEN 3</fullName>
    </alternativeName>
</protein>
<accession>Q9SZ11</accession>
<accession>Q93ZT1</accession>
<comment type="function">
    <text evidence="5">Involved in primary cell wall organization. Required for the accumulation of crystalline cellulose.</text>
</comment>
<comment type="catalytic activity">
    <reaction evidence="1">
        <text>a sn-glycero-3-phosphodiester + H2O = an alcohol + sn-glycerol 3-phosphate + H(+)</text>
        <dbReference type="Rhea" id="RHEA:12969"/>
        <dbReference type="ChEBI" id="CHEBI:15377"/>
        <dbReference type="ChEBI" id="CHEBI:15378"/>
        <dbReference type="ChEBI" id="CHEBI:30879"/>
        <dbReference type="ChEBI" id="CHEBI:57597"/>
        <dbReference type="ChEBI" id="CHEBI:83408"/>
        <dbReference type="EC" id="3.1.4.46"/>
    </reaction>
</comment>
<comment type="subcellular location">
    <subcellularLocation>
        <location evidence="5">Cell membrane</location>
        <topology evidence="2">Single-pass type I membrane protein</topology>
    </subcellularLocation>
</comment>
<comment type="tissue specificity">
    <text evidence="5 6">Expressed in roots, shoots, rosette and cauline leaves, stems, flowers and siliques.</text>
</comment>
<comment type="disruption phenotype">
    <text evidence="4 5">Defective in root hair formation (PubMed:16367956, PubMed:18718934). This phenotype is partially suppressed by application of exogenous borate (PubMed:18718934).</text>
</comment>
<comment type="similarity">
    <text evidence="10">Belongs to the glycerophosphoryl diester phosphodiesterase family.</text>
</comment>
<comment type="sequence caution" evidence="10">
    <conflict type="erroneous gene model prediction">
        <sequence resource="EMBL-CDS" id="CAB36515"/>
    </conflict>
</comment>
<comment type="sequence caution" evidence="10">
    <conflict type="erroneous gene model prediction">
        <sequence resource="EMBL-CDS" id="CAB79524"/>
    </conflict>
</comment>
<proteinExistence type="evidence at transcript level"/>
<evidence type="ECO:0000250" key="1">
    <source>
        <dbReference type="UniProtKB" id="Q7Y208"/>
    </source>
</evidence>
<evidence type="ECO:0000255" key="2"/>
<evidence type="ECO:0000256" key="3">
    <source>
        <dbReference type="SAM" id="MobiDB-lite"/>
    </source>
</evidence>
<evidence type="ECO:0000269" key="4">
    <source>
    </source>
</evidence>
<evidence type="ECO:0000269" key="5">
    <source>
    </source>
</evidence>
<evidence type="ECO:0000269" key="6">
    <source>
    </source>
</evidence>
<evidence type="ECO:0000303" key="7">
    <source>
    </source>
</evidence>
<evidence type="ECO:0000303" key="8">
    <source>
    </source>
</evidence>
<evidence type="ECO:0000303" key="9">
    <source>
    </source>
</evidence>
<evidence type="ECO:0000305" key="10"/>
<organism>
    <name type="scientific">Arabidopsis thaliana</name>
    <name type="common">Mouse-ear cress</name>
    <dbReference type="NCBI Taxonomy" id="3702"/>
    <lineage>
        <taxon>Eukaryota</taxon>
        <taxon>Viridiplantae</taxon>
        <taxon>Streptophyta</taxon>
        <taxon>Embryophyta</taxon>
        <taxon>Tracheophyta</taxon>
        <taxon>Spermatophyta</taxon>
        <taxon>Magnoliopsida</taxon>
        <taxon>eudicotyledons</taxon>
        <taxon>Gunneridae</taxon>
        <taxon>Pentapetalae</taxon>
        <taxon>rosids</taxon>
        <taxon>malvids</taxon>
        <taxon>Brassicales</taxon>
        <taxon>Brassicaceae</taxon>
        <taxon>Camelineae</taxon>
        <taxon>Arabidopsis</taxon>
    </lineage>
</organism>
<dbReference type="EC" id="3.1.4.46" evidence="1"/>
<dbReference type="EMBL" id="AL035440">
    <property type="protein sequence ID" value="CAB36515.1"/>
    <property type="status" value="ALT_SEQ"/>
    <property type="molecule type" value="Genomic_DNA"/>
</dbReference>
<dbReference type="EMBL" id="AL161565">
    <property type="protein sequence ID" value="CAB79524.1"/>
    <property type="status" value="ALT_SEQ"/>
    <property type="molecule type" value="Genomic_DNA"/>
</dbReference>
<dbReference type="EMBL" id="CP002687">
    <property type="protein sequence ID" value="AEE85238.1"/>
    <property type="molecule type" value="Genomic_DNA"/>
</dbReference>
<dbReference type="EMBL" id="AY056280">
    <property type="protein sequence ID" value="AAL07129.1"/>
    <property type="molecule type" value="mRNA"/>
</dbReference>
<dbReference type="PIR" id="T04792">
    <property type="entry name" value="T04792"/>
</dbReference>
<dbReference type="RefSeq" id="NP_567755.1">
    <property type="nucleotide sequence ID" value="NM_118803.5"/>
</dbReference>
<dbReference type="SMR" id="Q9SZ11"/>
<dbReference type="BioGRID" id="14063">
    <property type="interactions" value="2"/>
</dbReference>
<dbReference type="FunCoup" id="Q9SZ11">
    <property type="interactions" value="503"/>
</dbReference>
<dbReference type="STRING" id="3702.Q9SZ11"/>
<dbReference type="GlyCosmos" id="Q9SZ11">
    <property type="glycosylation" value="12 sites, No reported glycans"/>
</dbReference>
<dbReference type="GlyGen" id="Q9SZ11">
    <property type="glycosylation" value="13 sites"/>
</dbReference>
<dbReference type="PaxDb" id="3702-AT4G26690.1"/>
<dbReference type="ProteomicsDB" id="247176"/>
<dbReference type="EnsemblPlants" id="AT4G26690.1">
    <property type="protein sequence ID" value="AT4G26690.1"/>
    <property type="gene ID" value="AT4G26690"/>
</dbReference>
<dbReference type="GeneID" id="828776"/>
<dbReference type="Gramene" id="AT4G26690.1">
    <property type="protein sequence ID" value="AT4G26690.1"/>
    <property type="gene ID" value="AT4G26690"/>
</dbReference>
<dbReference type="KEGG" id="ath:AT4G26690"/>
<dbReference type="Araport" id="AT4G26690"/>
<dbReference type="TAIR" id="AT4G26690">
    <property type="gene designation" value="SHV3"/>
</dbReference>
<dbReference type="eggNOG" id="KOG2258">
    <property type="taxonomic scope" value="Eukaryota"/>
</dbReference>
<dbReference type="HOGENOM" id="CLU_010414_0_1_1"/>
<dbReference type="InParanoid" id="Q9SZ11"/>
<dbReference type="OMA" id="SPWLTLN"/>
<dbReference type="PRO" id="PR:Q9SZ11"/>
<dbReference type="Proteomes" id="UP000006548">
    <property type="component" value="Chromosome 4"/>
</dbReference>
<dbReference type="ExpressionAtlas" id="Q9SZ11">
    <property type="expression patterns" value="baseline and differential"/>
</dbReference>
<dbReference type="GO" id="GO:0005829">
    <property type="term" value="C:cytosol"/>
    <property type="evidence" value="ECO:0007005"/>
    <property type="project" value="TAIR"/>
</dbReference>
<dbReference type="GO" id="GO:0005886">
    <property type="term" value="C:plasma membrane"/>
    <property type="evidence" value="ECO:0000314"/>
    <property type="project" value="TAIR"/>
</dbReference>
<dbReference type="GO" id="GO:0008889">
    <property type="term" value="F:glycerophosphodiester phosphodiesterase activity"/>
    <property type="evidence" value="ECO:0007669"/>
    <property type="project" value="UniProtKB-EC"/>
</dbReference>
<dbReference type="GO" id="GO:0009932">
    <property type="term" value="P:cell tip growth"/>
    <property type="evidence" value="ECO:0000315"/>
    <property type="project" value="TAIR"/>
</dbReference>
<dbReference type="GO" id="GO:0071555">
    <property type="term" value="P:cell wall organization"/>
    <property type="evidence" value="ECO:0007669"/>
    <property type="project" value="UniProtKB-KW"/>
</dbReference>
<dbReference type="GO" id="GO:0006071">
    <property type="term" value="P:glycerol metabolic process"/>
    <property type="evidence" value="ECO:0007669"/>
    <property type="project" value="UniProtKB-KW"/>
</dbReference>
<dbReference type="GO" id="GO:0006629">
    <property type="term" value="P:lipid metabolic process"/>
    <property type="evidence" value="ECO:0007669"/>
    <property type="project" value="InterPro"/>
</dbReference>
<dbReference type="GO" id="GO:0010053">
    <property type="term" value="P:root epidermal cell differentiation"/>
    <property type="evidence" value="ECO:0000315"/>
    <property type="project" value="TAIR"/>
</dbReference>
<dbReference type="GO" id="GO:0048765">
    <property type="term" value="P:root hair cell differentiation"/>
    <property type="evidence" value="ECO:0000315"/>
    <property type="project" value="TAIR"/>
</dbReference>
<dbReference type="CDD" id="cd08603">
    <property type="entry name" value="GDPD_SHV3_repeat_1"/>
    <property type="match status" value="1"/>
</dbReference>
<dbReference type="CDD" id="cd08604">
    <property type="entry name" value="GDPD_SHV3_repeat_2"/>
    <property type="match status" value="1"/>
</dbReference>
<dbReference type="FunFam" id="3.20.20.190:FF:000011">
    <property type="entry name" value="Glycerophosphodiester phosphodiesterase GDPDL3"/>
    <property type="match status" value="1"/>
</dbReference>
<dbReference type="FunFam" id="3.20.20.190:FF:000013">
    <property type="entry name" value="Glycerophosphodiester phosphodiesterase GDPDL3"/>
    <property type="match status" value="1"/>
</dbReference>
<dbReference type="Gene3D" id="3.20.20.190">
    <property type="entry name" value="Phosphatidylinositol (PI) phosphodiesterase"/>
    <property type="match status" value="2"/>
</dbReference>
<dbReference type="InterPro" id="IPR030395">
    <property type="entry name" value="GP_PDE_dom"/>
</dbReference>
<dbReference type="InterPro" id="IPR017946">
    <property type="entry name" value="PLC-like_Pdiesterase_TIM-brl"/>
</dbReference>
<dbReference type="PANTHER" id="PTHR43620:SF7">
    <property type="entry name" value="GLYCEROPHOSPHODIESTER PHOSPHODIESTERASE GDPD5-RELATED"/>
    <property type="match status" value="1"/>
</dbReference>
<dbReference type="PANTHER" id="PTHR43620">
    <property type="entry name" value="GLYCEROPHOSPHORYL DIESTER PHOSPHODIESTERASE"/>
    <property type="match status" value="1"/>
</dbReference>
<dbReference type="Pfam" id="PF03009">
    <property type="entry name" value="GDPD"/>
    <property type="match status" value="1"/>
</dbReference>
<dbReference type="SUPFAM" id="SSF51695">
    <property type="entry name" value="PLC-like phosphodiesterases"/>
    <property type="match status" value="2"/>
</dbReference>
<dbReference type="PROSITE" id="PS51704">
    <property type="entry name" value="GP_PDE"/>
    <property type="match status" value="2"/>
</dbReference>
<sequence>MRGLLRASSLLLCGVILIQLLAAQIHAQSKKPKSPWPTLTGDPPLVIARGGFSGLFPDSSYDAYNFAILTSVPDAVLWCDVQLTKDALGICFPDLTMRNSSSIEAVYPTRQKSYPVNGVPTSGWFTIDFSLKDLKDVNLIRGILSRSEKFDGNSNPIMTVQSVSTQMKPSFFWLNVQHDAFYAQHNLSMSSFLVAASKTVLIDFISSPEVNFFKKIAGRFGRNGPSLVFRFLGQDEFEPTTNRTYGSILSNLTFVKTFASGILVPKSYILPLDDQQYLLPHTSLVQDAHKAGLEVFVSGFANDIDIAHDYSFDPVSEYLSFVDNGNFSVDGVLSDFPITASASLDCFSHVGRNATKQVDFLVITKDGASGDYPGCTDLAYKKAIKDGADVIDCSVQLSSDGTPFCLSSIDLGNSTTVSLTAFRNRSTTVPELGSLGAIYTFSLTWAEIQTLTPAISNPYRVTSLFRNPKQKNAGKLFSLSDFLSLAKNSTSLSGVLISVENAAYLREEQGLDVVKAVLDTLTQTGYSNSTATKVMIQSTNSSVLVDFKKQSQYETVYKVEENIRDILDSAIEDIKKFADAVVIQKLSVFPVAQSFITTQTNVVEKLQKSQLPVYVELFQNEFLSQPYDFFADATVEINSYITGAGINGTITEFPFTAARYKRNLCLGRKETIPYMAPAQPGALLTLVSPTAFPPAEAPNPVFTDADVTEPPLPPVTAKAPTSSPGTPSTNAQAPSGQTRITLSLLLSVFAMVLASLLLL</sequence>